<sequence>MNPANHSQVAGFVLLGLSQVWELRFVFFTVFSAVYFMTVVGNLLIVVIVTSDPHLHTTMYFLLGNLSFLDFCYSSITAPRMLVDLLSGNPTISFGGCLTQLFFFHFIGGIKIFLLTVMAYDRYIAISQPLHYTLIMNQTVCALLMAASWVGGFIHSIVQIALTIQLPFCGPDKLDNFYCDVPQLIKLACTDTFVLELLMVSNNGLVTLMCFLVLLGSYTALLVMLRSHSREGRSKALSTCASHIAVVTLIFVPCIYVYTRPFRTFPMDKAVSVLYTIVTPMLNPAIYTLRNKEVIMAMKKLWRRKKDPIGPLEHRPLH</sequence>
<accession>Q8NGN0</accession>
<accession>B9EGZ4</accession>
<accession>Q6IFE6</accession>
<keyword id="KW-1003">Cell membrane</keyword>
<keyword id="KW-1015">Disulfide bond</keyword>
<keyword id="KW-0297">G-protein coupled receptor</keyword>
<keyword id="KW-0325">Glycoprotein</keyword>
<keyword id="KW-0472">Membrane</keyword>
<keyword id="KW-0552">Olfaction</keyword>
<keyword id="KW-0675">Receptor</keyword>
<keyword id="KW-1185">Reference proteome</keyword>
<keyword id="KW-0716">Sensory transduction</keyword>
<keyword id="KW-0807">Transducer</keyword>
<keyword id="KW-0812">Transmembrane</keyword>
<keyword id="KW-1133">Transmembrane helix</keyword>
<comment type="function">
    <text evidence="3">Odorant receptor.</text>
</comment>
<comment type="subcellular location">
    <subcellularLocation>
        <location>Cell membrane</location>
        <topology>Multi-pass membrane protein</topology>
    </subcellularLocation>
</comment>
<comment type="similarity">
    <text evidence="2">Belongs to the G-protein coupled receptor 1 family.</text>
</comment>
<comment type="online information" name="Human Olfactory Receptor Data Exploratorium (HORDE)">
    <link uri="http://genome.weizmann.ac.il/horde/card/index/symbol:OR4D5"/>
</comment>
<name>OR4D5_HUMAN</name>
<protein>
    <recommendedName>
        <fullName>Olfactory receptor 4D5</fullName>
    </recommendedName>
    <alternativeName>
        <fullName>Olfactory receptor OR11-276</fullName>
    </alternativeName>
</protein>
<organism>
    <name type="scientific">Homo sapiens</name>
    <name type="common">Human</name>
    <dbReference type="NCBI Taxonomy" id="9606"/>
    <lineage>
        <taxon>Eukaryota</taxon>
        <taxon>Metazoa</taxon>
        <taxon>Chordata</taxon>
        <taxon>Craniata</taxon>
        <taxon>Vertebrata</taxon>
        <taxon>Euteleostomi</taxon>
        <taxon>Mammalia</taxon>
        <taxon>Eutheria</taxon>
        <taxon>Euarchontoglires</taxon>
        <taxon>Primates</taxon>
        <taxon>Haplorrhini</taxon>
        <taxon>Catarrhini</taxon>
        <taxon>Hominidae</taxon>
        <taxon>Homo</taxon>
    </lineage>
</organism>
<feature type="chain" id="PRO_0000150539" description="Olfactory receptor 4D5">
    <location>
        <begin position="1"/>
        <end position="318"/>
    </location>
</feature>
<feature type="topological domain" description="Extracellular" evidence="1">
    <location>
        <begin position="1"/>
        <end position="25"/>
    </location>
</feature>
<feature type="transmembrane region" description="Helical; Name=1" evidence="1">
    <location>
        <begin position="26"/>
        <end position="49"/>
    </location>
</feature>
<feature type="topological domain" description="Cytoplasmic" evidence="1">
    <location>
        <begin position="50"/>
        <end position="57"/>
    </location>
</feature>
<feature type="transmembrane region" description="Helical; Name=2" evidence="1">
    <location>
        <begin position="58"/>
        <end position="79"/>
    </location>
</feature>
<feature type="topological domain" description="Extracellular" evidence="1">
    <location>
        <begin position="80"/>
        <end position="100"/>
    </location>
</feature>
<feature type="transmembrane region" description="Helical; Name=3" evidence="1">
    <location>
        <begin position="101"/>
        <end position="120"/>
    </location>
</feature>
<feature type="topological domain" description="Cytoplasmic" evidence="1">
    <location>
        <begin position="121"/>
        <end position="139"/>
    </location>
</feature>
<feature type="transmembrane region" description="Helical; Name=4" evidence="1">
    <location>
        <begin position="140"/>
        <end position="158"/>
    </location>
</feature>
<feature type="topological domain" description="Extracellular" evidence="1">
    <location>
        <begin position="159"/>
        <end position="195"/>
    </location>
</feature>
<feature type="transmembrane region" description="Helical; Name=5" evidence="1">
    <location>
        <begin position="196"/>
        <end position="219"/>
    </location>
</feature>
<feature type="topological domain" description="Cytoplasmic" evidence="1">
    <location>
        <begin position="220"/>
        <end position="235"/>
    </location>
</feature>
<feature type="transmembrane region" description="Helical; Name=6" evidence="1">
    <location>
        <begin position="236"/>
        <end position="258"/>
    </location>
</feature>
<feature type="topological domain" description="Extracellular" evidence="1">
    <location>
        <begin position="259"/>
        <end position="269"/>
    </location>
</feature>
<feature type="transmembrane region" description="Helical; Name=7" evidence="1">
    <location>
        <begin position="270"/>
        <end position="289"/>
    </location>
</feature>
<feature type="topological domain" description="Cytoplasmic" evidence="1">
    <location>
        <begin position="290"/>
        <end position="318"/>
    </location>
</feature>
<feature type="glycosylation site" description="N-linked (GlcNAc...) asparagine" evidence="1">
    <location>
        <position position="5"/>
    </location>
</feature>
<feature type="disulfide bond" evidence="2">
    <location>
        <begin position="97"/>
        <end position="189"/>
    </location>
</feature>
<reference key="1">
    <citation type="submission" date="2001-07" db="EMBL/GenBank/DDBJ databases">
        <title>Genome-wide discovery and analysis of human seven transmembrane helix receptor genes.</title>
        <authorList>
            <person name="Suwa M."/>
            <person name="Sato T."/>
            <person name="Okouchi I."/>
            <person name="Arita M."/>
            <person name="Futami K."/>
            <person name="Matsumoto S."/>
            <person name="Tsutsumi S."/>
            <person name="Aburatani H."/>
            <person name="Asai K."/>
            <person name="Akiyama Y."/>
        </authorList>
    </citation>
    <scope>NUCLEOTIDE SEQUENCE [GENOMIC DNA]</scope>
</reference>
<reference key="2">
    <citation type="submission" date="2005-07" db="EMBL/GenBank/DDBJ databases">
        <authorList>
            <person name="Mural R.J."/>
            <person name="Istrail S."/>
            <person name="Sutton G.G."/>
            <person name="Florea L."/>
            <person name="Halpern A.L."/>
            <person name="Mobarry C.M."/>
            <person name="Lippert R."/>
            <person name="Walenz B."/>
            <person name="Shatkay H."/>
            <person name="Dew I."/>
            <person name="Miller J.R."/>
            <person name="Flanigan M.J."/>
            <person name="Edwards N.J."/>
            <person name="Bolanos R."/>
            <person name="Fasulo D."/>
            <person name="Halldorsson B.V."/>
            <person name="Hannenhalli S."/>
            <person name="Turner R."/>
            <person name="Yooseph S."/>
            <person name="Lu F."/>
            <person name="Nusskern D.R."/>
            <person name="Shue B.C."/>
            <person name="Zheng X.H."/>
            <person name="Zhong F."/>
            <person name="Delcher A.L."/>
            <person name="Huson D.H."/>
            <person name="Kravitz S.A."/>
            <person name="Mouchard L."/>
            <person name="Reinert K."/>
            <person name="Remington K.A."/>
            <person name="Clark A.G."/>
            <person name="Waterman M.S."/>
            <person name="Eichler E.E."/>
            <person name="Adams M.D."/>
            <person name="Hunkapiller M.W."/>
            <person name="Myers E.W."/>
            <person name="Venter J.C."/>
        </authorList>
    </citation>
    <scope>NUCLEOTIDE SEQUENCE [LARGE SCALE GENOMIC DNA]</scope>
</reference>
<reference key="3">
    <citation type="journal article" date="2004" name="Genome Res.">
        <title>The status, quality, and expansion of the NIH full-length cDNA project: the Mammalian Gene Collection (MGC).</title>
        <authorList>
            <consortium name="The MGC Project Team"/>
        </authorList>
    </citation>
    <scope>NUCLEOTIDE SEQUENCE [LARGE SCALE MRNA]</scope>
    <source>
        <tissue>Testis</tissue>
    </source>
</reference>
<reference key="4">
    <citation type="journal article" date="2004" name="Proc. Natl. Acad. Sci. U.S.A.">
        <title>The human olfactory receptor gene family.</title>
        <authorList>
            <person name="Malnic B."/>
            <person name="Godfrey P.A."/>
            <person name="Buck L.B."/>
        </authorList>
    </citation>
    <scope>IDENTIFICATION</scope>
</reference>
<reference key="5">
    <citation type="journal article" date="2004" name="Proc. Natl. Acad. Sci. U.S.A.">
        <authorList>
            <person name="Malnic B."/>
            <person name="Godfrey P.A."/>
            <person name="Buck L.B."/>
        </authorList>
    </citation>
    <scope>ERRATUM OF PUBMED:14983052</scope>
</reference>
<gene>
    <name type="primary">OR4D5</name>
</gene>
<evidence type="ECO:0000255" key="1"/>
<evidence type="ECO:0000255" key="2">
    <source>
        <dbReference type="PROSITE-ProRule" id="PRU00521"/>
    </source>
</evidence>
<evidence type="ECO:0000305" key="3"/>
<dbReference type="EMBL" id="AB065760">
    <property type="protein sequence ID" value="BAC05980.1"/>
    <property type="molecule type" value="Genomic_DNA"/>
</dbReference>
<dbReference type="EMBL" id="CH471065">
    <property type="protein sequence ID" value="EAW67561.1"/>
    <property type="molecule type" value="Genomic_DNA"/>
</dbReference>
<dbReference type="EMBL" id="BC136943">
    <property type="protein sequence ID" value="AAI36944.1"/>
    <property type="molecule type" value="mRNA"/>
</dbReference>
<dbReference type="EMBL" id="BC136945">
    <property type="protein sequence ID" value="AAI36946.1"/>
    <property type="molecule type" value="mRNA"/>
</dbReference>
<dbReference type="EMBL" id="BK004316">
    <property type="protein sequence ID" value="DAA04714.1"/>
    <property type="molecule type" value="Genomic_DNA"/>
</dbReference>
<dbReference type="CCDS" id="CCDS31699.1"/>
<dbReference type="RefSeq" id="NP_001001965.1">
    <property type="nucleotide sequence ID" value="NM_001001965.1"/>
</dbReference>
<dbReference type="SMR" id="Q8NGN0"/>
<dbReference type="FunCoup" id="Q8NGN0">
    <property type="interactions" value="416"/>
</dbReference>
<dbReference type="STRING" id="9606.ENSP00000305970"/>
<dbReference type="GlyCosmos" id="Q8NGN0">
    <property type="glycosylation" value="1 site, No reported glycans"/>
</dbReference>
<dbReference type="GlyGen" id="Q8NGN0">
    <property type="glycosylation" value="1 site"/>
</dbReference>
<dbReference type="iPTMnet" id="Q8NGN0"/>
<dbReference type="PhosphoSitePlus" id="Q8NGN0"/>
<dbReference type="BioMuta" id="OR4D5"/>
<dbReference type="DMDM" id="38372730"/>
<dbReference type="PaxDb" id="9606-ENSP00000305970"/>
<dbReference type="Antibodypedia" id="49667">
    <property type="antibodies" value="20 antibodies from 12 providers"/>
</dbReference>
<dbReference type="DNASU" id="219875"/>
<dbReference type="Ensembl" id="ENST00000307033.3">
    <property type="protein sequence ID" value="ENSP00000305970.2"/>
    <property type="gene ID" value="ENSG00000171014.3"/>
</dbReference>
<dbReference type="GeneID" id="219875"/>
<dbReference type="KEGG" id="hsa:219875"/>
<dbReference type="MANE-Select" id="ENST00000307033.3">
    <property type="protein sequence ID" value="ENSP00000305970.2"/>
    <property type="RefSeq nucleotide sequence ID" value="NM_001001965.1"/>
    <property type="RefSeq protein sequence ID" value="NP_001001965.1"/>
</dbReference>
<dbReference type="UCSC" id="uc001pzk.2">
    <property type="organism name" value="human"/>
</dbReference>
<dbReference type="AGR" id="HGNC:14852"/>
<dbReference type="CTD" id="219875"/>
<dbReference type="GeneCards" id="OR4D5"/>
<dbReference type="HGNC" id="HGNC:14852">
    <property type="gene designation" value="OR4D5"/>
</dbReference>
<dbReference type="HPA" id="ENSG00000171014">
    <property type="expression patterns" value="Not detected"/>
</dbReference>
<dbReference type="neXtProt" id="NX_Q8NGN0"/>
<dbReference type="OpenTargets" id="ENSG00000171014"/>
<dbReference type="PharmGKB" id="PA32272"/>
<dbReference type="VEuPathDB" id="HostDB:ENSG00000171014"/>
<dbReference type="eggNOG" id="ENOG502SIBY">
    <property type="taxonomic scope" value="Eukaryota"/>
</dbReference>
<dbReference type="GeneTree" id="ENSGT00940000163057"/>
<dbReference type="HOGENOM" id="CLU_012526_1_0_1"/>
<dbReference type="InParanoid" id="Q8NGN0"/>
<dbReference type="OMA" id="YFMTVVG"/>
<dbReference type="OrthoDB" id="9845816at2759"/>
<dbReference type="PAN-GO" id="Q8NGN0">
    <property type="GO annotations" value="2 GO annotations based on evolutionary models"/>
</dbReference>
<dbReference type="PhylomeDB" id="Q8NGN0"/>
<dbReference type="TreeFam" id="TF352732"/>
<dbReference type="PathwayCommons" id="Q8NGN0"/>
<dbReference type="Reactome" id="R-HSA-9752946">
    <property type="pathway name" value="Expression and translocation of olfactory receptors"/>
</dbReference>
<dbReference type="BioGRID-ORCS" id="219875">
    <property type="hits" value="8 hits in 747 CRISPR screens"/>
</dbReference>
<dbReference type="GeneWiki" id="OR4D5"/>
<dbReference type="GenomeRNAi" id="219875"/>
<dbReference type="Pharos" id="Q8NGN0">
    <property type="development level" value="Tdark"/>
</dbReference>
<dbReference type="PRO" id="PR:Q8NGN0"/>
<dbReference type="Proteomes" id="UP000005640">
    <property type="component" value="Chromosome 11"/>
</dbReference>
<dbReference type="RNAct" id="Q8NGN0">
    <property type="molecule type" value="protein"/>
</dbReference>
<dbReference type="Bgee" id="ENSG00000171014">
    <property type="expression patterns" value="Expressed in body of pancreas and 1 other cell type or tissue"/>
</dbReference>
<dbReference type="ExpressionAtlas" id="Q8NGN0">
    <property type="expression patterns" value="baseline and differential"/>
</dbReference>
<dbReference type="GO" id="GO:0005886">
    <property type="term" value="C:plasma membrane"/>
    <property type="evidence" value="ECO:0000318"/>
    <property type="project" value="GO_Central"/>
</dbReference>
<dbReference type="GO" id="GO:0004930">
    <property type="term" value="F:G protein-coupled receptor activity"/>
    <property type="evidence" value="ECO:0007669"/>
    <property type="project" value="UniProtKB-KW"/>
</dbReference>
<dbReference type="GO" id="GO:0004984">
    <property type="term" value="F:olfactory receptor activity"/>
    <property type="evidence" value="ECO:0000318"/>
    <property type="project" value="GO_Central"/>
</dbReference>
<dbReference type="CDD" id="cd15936">
    <property type="entry name" value="7tmA_OR4D-like"/>
    <property type="match status" value="1"/>
</dbReference>
<dbReference type="FunFam" id="1.10.1220.70:FF:000001">
    <property type="entry name" value="Olfactory receptor"/>
    <property type="match status" value="1"/>
</dbReference>
<dbReference type="FunFam" id="1.20.1070.10:FF:000007">
    <property type="entry name" value="Olfactory receptor"/>
    <property type="match status" value="1"/>
</dbReference>
<dbReference type="Gene3D" id="1.20.1070.10">
    <property type="entry name" value="Rhodopsin 7-helix transmembrane proteins"/>
    <property type="match status" value="1"/>
</dbReference>
<dbReference type="InterPro" id="IPR000276">
    <property type="entry name" value="GPCR_Rhodpsn"/>
</dbReference>
<dbReference type="InterPro" id="IPR017452">
    <property type="entry name" value="GPCR_Rhodpsn_7TM"/>
</dbReference>
<dbReference type="InterPro" id="IPR000725">
    <property type="entry name" value="Olfact_rcpt"/>
</dbReference>
<dbReference type="InterPro" id="IPR050427">
    <property type="entry name" value="Olfactory_Receptors"/>
</dbReference>
<dbReference type="PANTHER" id="PTHR48002">
    <property type="entry name" value="OLFACTORY RECEPTOR"/>
    <property type="match status" value="1"/>
</dbReference>
<dbReference type="Pfam" id="PF13853">
    <property type="entry name" value="7tm_4"/>
    <property type="match status" value="1"/>
</dbReference>
<dbReference type="PRINTS" id="PR00237">
    <property type="entry name" value="GPCRRHODOPSN"/>
</dbReference>
<dbReference type="PRINTS" id="PR00245">
    <property type="entry name" value="OLFACTORYR"/>
</dbReference>
<dbReference type="SUPFAM" id="SSF81321">
    <property type="entry name" value="Family A G protein-coupled receptor-like"/>
    <property type="match status" value="1"/>
</dbReference>
<dbReference type="PROSITE" id="PS50262">
    <property type="entry name" value="G_PROTEIN_RECEP_F1_2"/>
    <property type="match status" value="1"/>
</dbReference>
<proteinExistence type="evidence at transcript level"/>